<dbReference type="EC" id="6.1.1.17" evidence="1"/>
<dbReference type="EMBL" id="CP001037">
    <property type="protein sequence ID" value="ACC80068.1"/>
    <property type="status" value="ALT_INIT"/>
    <property type="molecule type" value="Genomic_DNA"/>
</dbReference>
<dbReference type="RefSeq" id="WP_041565245.1">
    <property type="nucleotide sequence ID" value="NC_010628.1"/>
</dbReference>
<dbReference type="SMR" id="B2IYI1"/>
<dbReference type="STRING" id="63737.Npun_R1357"/>
<dbReference type="EnsemblBacteria" id="ACC80068">
    <property type="protein sequence ID" value="ACC80068"/>
    <property type="gene ID" value="Npun_R1357"/>
</dbReference>
<dbReference type="KEGG" id="npu:Npun_R1357"/>
<dbReference type="eggNOG" id="COG0008">
    <property type="taxonomic scope" value="Bacteria"/>
</dbReference>
<dbReference type="HOGENOM" id="CLU_015768_6_0_3"/>
<dbReference type="OrthoDB" id="9807503at2"/>
<dbReference type="PhylomeDB" id="B2IYI1"/>
<dbReference type="Proteomes" id="UP000001191">
    <property type="component" value="Chromosome"/>
</dbReference>
<dbReference type="GO" id="GO:0005829">
    <property type="term" value="C:cytosol"/>
    <property type="evidence" value="ECO:0007669"/>
    <property type="project" value="TreeGrafter"/>
</dbReference>
<dbReference type="GO" id="GO:0005524">
    <property type="term" value="F:ATP binding"/>
    <property type="evidence" value="ECO:0007669"/>
    <property type="project" value="UniProtKB-UniRule"/>
</dbReference>
<dbReference type="GO" id="GO:0004818">
    <property type="term" value="F:glutamate-tRNA ligase activity"/>
    <property type="evidence" value="ECO:0007669"/>
    <property type="project" value="UniProtKB-UniRule"/>
</dbReference>
<dbReference type="GO" id="GO:0000049">
    <property type="term" value="F:tRNA binding"/>
    <property type="evidence" value="ECO:0007669"/>
    <property type="project" value="InterPro"/>
</dbReference>
<dbReference type="GO" id="GO:0008270">
    <property type="term" value="F:zinc ion binding"/>
    <property type="evidence" value="ECO:0007669"/>
    <property type="project" value="InterPro"/>
</dbReference>
<dbReference type="GO" id="GO:0006424">
    <property type="term" value="P:glutamyl-tRNA aminoacylation"/>
    <property type="evidence" value="ECO:0007669"/>
    <property type="project" value="UniProtKB-UniRule"/>
</dbReference>
<dbReference type="CDD" id="cd00808">
    <property type="entry name" value="GluRS_core"/>
    <property type="match status" value="1"/>
</dbReference>
<dbReference type="FunFam" id="3.40.50.620:FF:000007">
    <property type="entry name" value="Glutamate--tRNA ligase"/>
    <property type="match status" value="1"/>
</dbReference>
<dbReference type="Gene3D" id="1.10.10.350">
    <property type="match status" value="1"/>
</dbReference>
<dbReference type="Gene3D" id="1.10.8.70">
    <property type="entry name" value="Glutamate-tRNA synthetase, class I, anticodon-binding domain 1"/>
    <property type="match status" value="1"/>
</dbReference>
<dbReference type="Gene3D" id="1.10.1160.10">
    <property type="entry name" value="Glutamyl-trna Synthetase, Domain 2"/>
    <property type="match status" value="1"/>
</dbReference>
<dbReference type="Gene3D" id="3.90.800.10">
    <property type="entry name" value="Glutamyl-tRNA Synthetase, Domain 3"/>
    <property type="match status" value="1"/>
</dbReference>
<dbReference type="Gene3D" id="3.40.50.620">
    <property type="entry name" value="HUPs"/>
    <property type="match status" value="1"/>
</dbReference>
<dbReference type="HAMAP" id="MF_00022">
    <property type="entry name" value="Glu_tRNA_synth_type1"/>
    <property type="match status" value="1"/>
</dbReference>
<dbReference type="InterPro" id="IPR045462">
    <property type="entry name" value="aa-tRNA-synth_I_cd-bd"/>
</dbReference>
<dbReference type="InterPro" id="IPR020751">
    <property type="entry name" value="aa-tRNA-synth_I_codon-bd_sub2"/>
</dbReference>
<dbReference type="InterPro" id="IPR001412">
    <property type="entry name" value="aa-tRNA-synth_I_CS"/>
</dbReference>
<dbReference type="InterPro" id="IPR008925">
    <property type="entry name" value="aa_tRNA-synth_I_cd-bd_sf"/>
</dbReference>
<dbReference type="InterPro" id="IPR004527">
    <property type="entry name" value="Glu-tRNA-ligase_bac/mito"/>
</dbReference>
<dbReference type="InterPro" id="IPR020752">
    <property type="entry name" value="Glu-tRNA-synth_I_codon-bd_sub1"/>
</dbReference>
<dbReference type="InterPro" id="IPR000924">
    <property type="entry name" value="Glu/Gln-tRNA-synth"/>
</dbReference>
<dbReference type="InterPro" id="IPR020058">
    <property type="entry name" value="Glu/Gln-tRNA-synth_Ib_cat-dom"/>
</dbReference>
<dbReference type="InterPro" id="IPR020061">
    <property type="entry name" value="Glu_tRNA_lig_a-bdl"/>
</dbReference>
<dbReference type="InterPro" id="IPR049940">
    <property type="entry name" value="GluQ/Sye"/>
</dbReference>
<dbReference type="InterPro" id="IPR033910">
    <property type="entry name" value="GluRS_core"/>
</dbReference>
<dbReference type="InterPro" id="IPR014729">
    <property type="entry name" value="Rossmann-like_a/b/a_fold"/>
</dbReference>
<dbReference type="NCBIfam" id="TIGR00464">
    <property type="entry name" value="gltX_bact"/>
    <property type="match status" value="1"/>
</dbReference>
<dbReference type="NCBIfam" id="NF004315">
    <property type="entry name" value="PRK05710.1-4"/>
    <property type="match status" value="1"/>
</dbReference>
<dbReference type="PANTHER" id="PTHR43311">
    <property type="entry name" value="GLUTAMATE--TRNA LIGASE"/>
    <property type="match status" value="1"/>
</dbReference>
<dbReference type="PANTHER" id="PTHR43311:SF2">
    <property type="entry name" value="GLUTAMATE--TRNA LIGASE, MITOCHONDRIAL-RELATED"/>
    <property type="match status" value="1"/>
</dbReference>
<dbReference type="Pfam" id="PF19269">
    <property type="entry name" value="Anticodon_2"/>
    <property type="match status" value="1"/>
</dbReference>
<dbReference type="Pfam" id="PF00749">
    <property type="entry name" value="tRNA-synt_1c"/>
    <property type="match status" value="1"/>
</dbReference>
<dbReference type="PRINTS" id="PR00987">
    <property type="entry name" value="TRNASYNTHGLU"/>
</dbReference>
<dbReference type="SUPFAM" id="SSF48163">
    <property type="entry name" value="An anticodon-binding domain of class I aminoacyl-tRNA synthetases"/>
    <property type="match status" value="1"/>
</dbReference>
<dbReference type="SUPFAM" id="SSF52374">
    <property type="entry name" value="Nucleotidylyl transferase"/>
    <property type="match status" value="1"/>
</dbReference>
<dbReference type="PROSITE" id="PS00178">
    <property type="entry name" value="AA_TRNA_LIGASE_I"/>
    <property type="match status" value="1"/>
</dbReference>
<feature type="chain" id="PRO_0000367721" description="Glutamate--tRNA ligase">
    <location>
        <begin position="1"/>
        <end position="481"/>
    </location>
</feature>
<feature type="short sequence motif" description="'HIGH' region" evidence="1">
    <location>
        <begin position="9"/>
        <end position="19"/>
    </location>
</feature>
<feature type="short sequence motif" description="'KMSKS' region" evidence="1">
    <location>
        <begin position="247"/>
        <end position="251"/>
    </location>
</feature>
<feature type="binding site" evidence="1">
    <location>
        <position position="250"/>
    </location>
    <ligand>
        <name>ATP</name>
        <dbReference type="ChEBI" id="CHEBI:30616"/>
    </ligand>
</feature>
<organism>
    <name type="scientific">Nostoc punctiforme (strain ATCC 29133 / PCC 73102)</name>
    <dbReference type="NCBI Taxonomy" id="63737"/>
    <lineage>
        <taxon>Bacteria</taxon>
        <taxon>Bacillati</taxon>
        <taxon>Cyanobacteriota</taxon>
        <taxon>Cyanophyceae</taxon>
        <taxon>Nostocales</taxon>
        <taxon>Nostocaceae</taxon>
        <taxon>Nostoc</taxon>
    </lineage>
</organism>
<name>SYE_NOSP7</name>
<keyword id="KW-0030">Aminoacyl-tRNA synthetase</keyword>
<keyword id="KW-0067">ATP-binding</keyword>
<keyword id="KW-0963">Cytoplasm</keyword>
<keyword id="KW-0436">Ligase</keyword>
<keyword id="KW-0547">Nucleotide-binding</keyword>
<keyword id="KW-0648">Protein biosynthesis</keyword>
<keyword id="KW-1185">Reference proteome</keyword>
<reference key="1">
    <citation type="journal article" date="2013" name="Plant Physiol.">
        <title>A Nostoc punctiforme Sugar Transporter Necessary to Establish a Cyanobacterium-Plant Symbiosis.</title>
        <authorList>
            <person name="Ekman M."/>
            <person name="Picossi S."/>
            <person name="Campbell E.L."/>
            <person name="Meeks J.C."/>
            <person name="Flores E."/>
        </authorList>
    </citation>
    <scope>NUCLEOTIDE SEQUENCE [LARGE SCALE GENOMIC DNA]</scope>
    <source>
        <strain>ATCC 29133 / PCC 73102</strain>
    </source>
</reference>
<proteinExistence type="inferred from homology"/>
<gene>
    <name evidence="1" type="primary">gltX</name>
    <name type="ordered locus">Npun_R1357</name>
</gene>
<sequence>MTVRVRIAPSPTGNLHIGTARTAVFNWLFARHHGGKFILRIEDTDLERSRPEYTDNILEGLRWLGLNWDEGPFFQSQRLDLYKEAVQKLLDQGLAYRCYTTSEELEALREAQKARGEAPRYDNRHRNLTPEQRAAYEAEGRSYVIRFKIEDGREIVWNDLVRGKMSWRGSDLGGDMVIARASEEGSGQPLYNFVVVVDDIDMQITHVIRGEDHIANTAKQILLYEAMGAKIPEFSHTPLILNMEGRKLSKRDGVTSISEFQKMGFTAEGLVNYMTLLGWSPPDSTQEIFTLETAAKEFGFERVNKAGAKFDWDKLDWLNSQYIHNTPVDKLTDLLIPFWEAAGYKFDGGRDRAWLEQLVTLISQSLTRLVDAVPQSQLFFSDTVEFSEEGSTQLKQEGSTAVLEAIVTALENQPQLSEAAAQDIIKQVVKEQKVKKGLVMRSLRAALTGDVHGPDLIQSWLLLNQIGLDKSRLSRAITEAN</sequence>
<protein>
    <recommendedName>
        <fullName evidence="1">Glutamate--tRNA ligase</fullName>
        <ecNumber evidence="1">6.1.1.17</ecNumber>
    </recommendedName>
    <alternativeName>
        <fullName evidence="1">Glutamyl-tRNA synthetase</fullName>
        <shortName evidence="1">GluRS</shortName>
    </alternativeName>
</protein>
<comment type="function">
    <text evidence="1">Catalyzes the attachment of glutamate to tRNA(Glu) in a two-step reaction: glutamate is first activated by ATP to form Glu-AMP and then transferred to the acceptor end of tRNA(Glu).</text>
</comment>
<comment type="catalytic activity">
    <reaction evidence="1">
        <text>tRNA(Glu) + L-glutamate + ATP = L-glutamyl-tRNA(Glu) + AMP + diphosphate</text>
        <dbReference type="Rhea" id="RHEA:23540"/>
        <dbReference type="Rhea" id="RHEA-COMP:9663"/>
        <dbReference type="Rhea" id="RHEA-COMP:9680"/>
        <dbReference type="ChEBI" id="CHEBI:29985"/>
        <dbReference type="ChEBI" id="CHEBI:30616"/>
        <dbReference type="ChEBI" id="CHEBI:33019"/>
        <dbReference type="ChEBI" id="CHEBI:78442"/>
        <dbReference type="ChEBI" id="CHEBI:78520"/>
        <dbReference type="ChEBI" id="CHEBI:456215"/>
        <dbReference type="EC" id="6.1.1.17"/>
    </reaction>
</comment>
<comment type="subunit">
    <text evidence="1">Monomer.</text>
</comment>
<comment type="subcellular location">
    <subcellularLocation>
        <location evidence="1">Cytoplasm</location>
    </subcellularLocation>
</comment>
<comment type="similarity">
    <text evidence="1">Belongs to the class-I aminoacyl-tRNA synthetase family. Glutamate--tRNA ligase type 1 subfamily.</text>
</comment>
<comment type="sequence caution" evidence="2">
    <conflict type="erroneous initiation">
        <sequence resource="EMBL-CDS" id="ACC80068"/>
    </conflict>
</comment>
<evidence type="ECO:0000255" key="1">
    <source>
        <dbReference type="HAMAP-Rule" id="MF_00022"/>
    </source>
</evidence>
<evidence type="ECO:0000305" key="2"/>
<accession>B2IYI1</accession>